<keyword id="KW-0479">Metal-binding</keyword>
<keyword id="KW-0507">mRNA processing</keyword>
<keyword id="KW-0508">mRNA splicing</keyword>
<keyword id="KW-0539">Nucleus</keyword>
<keyword id="KW-0597">Phosphoprotein</keyword>
<keyword id="KW-1185">Reference proteome</keyword>
<keyword id="KW-0747">Spliceosome</keyword>
<keyword id="KW-0862">Zinc</keyword>
<keyword id="KW-0863">Zinc-finger</keyword>
<protein>
    <recommendedName>
        <fullName>Splicing factor 3A subunit 3</fullName>
    </recommendedName>
    <alternativeName>
        <fullName>Protein noisette</fullName>
    </alternativeName>
</protein>
<dbReference type="EMBL" id="AJ223042">
    <property type="protein sequence ID" value="CAA11045.1"/>
    <property type="molecule type" value="Genomic_DNA"/>
</dbReference>
<dbReference type="EMBL" id="AE014297">
    <property type="protein sequence ID" value="AAF51999.1"/>
    <property type="molecule type" value="Genomic_DNA"/>
</dbReference>
<dbReference type="EMBL" id="AY051676">
    <property type="protein sequence ID" value="AAK93100.1"/>
    <property type="molecule type" value="mRNA"/>
</dbReference>
<dbReference type="RefSeq" id="NP_477114.1">
    <property type="nucleotide sequence ID" value="NM_057766.5"/>
</dbReference>
<dbReference type="SMR" id="O46106"/>
<dbReference type="BioGRID" id="65884">
    <property type="interactions" value="35"/>
</dbReference>
<dbReference type="DIP" id="DIP-19450N"/>
<dbReference type="FunCoup" id="O46106">
    <property type="interactions" value="2927"/>
</dbReference>
<dbReference type="IntAct" id="O46106">
    <property type="interactions" value="9"/>
</dbReference>
<dbReference type="STRING" id="7227.FBpp0078400"/>
<dbReference type="iPTMnet" id="O46106"/>
<dbReference type="PaxDb" id="7227-FBpp0078400"/>
<dbReference type="DNASU" id="40678"/>
<dbReference type="EnsemblMetazoa" id="FBtr0078751">
    <property type="protein sequence ID" value="FBpp0078400"/>
    <property type="gene ID" value="FBgn0014366"/>
</dbReference>
<dbReference type="GeneID" id="40678"/>
<dbReference type="KEGG" id="dme:Dmel_CG2925"/>
<dbReference type="UCSC" id="CG2925-RA">
    <property type="organism name" value="d. melanogaster"/>
</dbReference>
<dbReference type="AGR" id="FB:FBgn0014366"/>
<dbReference type="CTD" id="40678"/>
<dbReference type="FlyBase" id="FBgn0014366">
    <property type="gene designation" value="noi"/>
</dbReference>
<dbReference type="VEuPathDB" id="VectorBase:FBgn0014366"/>
<dbReference type="eggNOG" id="KOG2636">
    <property type="taxonomic scope" value="Eukaryota"/>
</dbReference>
<dbReference type="GeneTree" id="ENSGT00530000063402"/>
<dbReference type="HOGENOM" id="CLU_027160_2_0_1"/>
<dbReference type="InParanoid" id="O46106"/>
<dbReference type="OMA" id="GPKAFQK"/>
<dbReference type="OrthoDB" id="2160351at2759"/>
<dbReference type="PhylomeDB" id="O46106"/>
<dbReference type="SignaLink" id="O46106"/>
<dbReference type="BioGRID-ORCS" id="40678">
    <property type="hits" value="1 hit in 1 CRISPR screen"/>
</dbReference>
<dbReference type="GenomeRNAi" id="40678"/>
<dbReference type="PRO" id="PR:O46106"/>
<dbReference type="Proteomes" id="UP000000803">
    <property type="component" value="Chromosome 3R"/>
</dbReference>
<dbReference type="Bgee" id="FBgn0014366">
    <property type="expression patterns" value="Expressed in eye disc (Drosophila) and 58 other cell types or tissues"/>
</dbReference>
<dbReference type="GO" id="GO:0071013">
    <property type="term" value="C:catalytic step 2 spliceosome"/>
    <property type="evidence" value="ECO:0007005"/>
    <property type="project" value="FlyBase"/>
</dbReference>
<dbReference type="GO" id="GO:0071011">
    <property type="term" value="C:precatalytic spliceosome"/>
    <property type="evidence" value="ECO:0007005"/>
    <property type="project" value="FlyBase"/>
</dbReference>
<dbReference type="GO" id="GO:0005681">
    <property type="term" value="C:spliceosomal complex"/>
    <property type="evidence" value="ECO:0000318"/>
    <property type="project" value="GO_Central"/>
</dbReference>
<dbReference type="GO" id="GO:0005686">
    <property type="term" value="C:U2 snRNP"/>
    <property type="evidence" value="ECO:0000250"/>
    <property type="project" value="FlyBase"/>
</dbReference>
<dbReference type="GO" id="GO:0003723">
    <property type="term" value="F:RNA binding"/>
    <property type="evidence" value="ECO:0000250"/>
    <property type="project" value="FlyBase"/>
</dbReference>
<dbReference type="GO" id="GO:0008270">
    <property type="term" value="F:zinc ion binding"/>
    <property type="evidence" value="ECO:0007669"/>
    <property type="project" value="UniProtKB-KW"/>
</dbReference>
<dbReference type="GO" id="GO:0009566">
    <property type="term" value="P:fertilization"/>
    <property type="evidence" value="ECO:0000315"/>
    <property type="project" value="UniProtKB"/>
</dbReference>
<dbReference type="GO" id="GO:0000278">
    <property type="term" value="P:mitotic cell cycle"/>
    <property type="evidence" value="ECO:0007001"/>
    <property type="project" value="FlyBase"/>
</dbReference>
<dbReference type="GO" id="GO:0000398">
    <property type="term" value="P:mRNA splicing, via spliceosome"/>
    <property type="evidence" value="ECO:0000250"/>
    <property type="project" value="FlyBase"/>
</dbReference>
<dbReference type="InterPro" id="IPR000690">
    <property type="entry name" value="Matrin/U1-C_Znf_C2H2"/>
</dbReference>
<dbReference type="InterPro" id="IPR051421">
    <property type="entry name" value="RNA_Proc_DNA_Dmg_Regulator"/>
</dbReference>
<dbReference type="InterPro" id="IPR025086">
    <property type="entry name" value="SDE2/SF3A3_SAP"/>
</dbReference>
<dbReference type="InterPro" id="IPR031774">
    <property type="entry name" value="SF3A3_dom"/>
</dbReference>
<dbReference type="InterPro" id="IPR024598">
    <property type="entry name" value="SF3a60/Prp9_C"/>
</dbReference>
<dbReference type="InterPro" id="IPR021966">
    <property type="entry name" value="SF3a60_bindingd"/>
</dbReference>
<dbReference type="PANTHER" id="PTHR12786:SF2">
    <property type="entry name" value="SPLICING FACTOR 3A SUBUNIT 3"/>
    <property type="match status" value="1"/>
</dbReference>
<dbReference type="PANTHER" id="PTHR12786">
    <property type="entry name" value="SPLICING FACTOR SF3A-RELATED"/>
    <property type="match status" value="1"/>
</dbReference>
<dbReference type="Pfam" id="PF13297">
    <property type="entry name" value="SDE2_2C"/>
    <property type="match status" value="1"/>
</dbReference>
<dbReference type="Pfam" id="PF16837">
    <property type="entry name" value="SF3A3"/>
    <property type="match status" value="1"/>
</dbReference>
<dbReference type="Pfam" id="PF12108">
    <property type="entry name" value="SF3a60_bindingd"/>
    <property type="match status" value="1"/>
</dbReference>
<dbReference type="Pfam" id="PF11931">
    <property type="entry name" value="SF3a60_Prp9_C"/>
    <property type="match status" value="1"/>
</dbReference>
<dbReference type="PROSITE" id="PS50171">
    <property type="entry name" value="ZF_MATRIN"/>
    <property type="match status" value="1"/>
</dbReference>
<evidence type="ECO:0000250" key="1"/>
<evidence type="ECO:0000255" key="2">
    <source>
        <dbReference type="PROSITE-ProRule" id="PRU00130"/>
    </source>
</evidence>
<evidence type="ECO:0000256" key="3">
    <source>
        <dbReference type="SAM" id="MobiDB-lite"/>
    </source>
</evidence>
<evidence type="ECO:0000269" key="4">
    <source>
    </source>
</evidence>
<evidence type="ECO:0000269" key="5">
    <source>
    </source>
</evidence>
<evidence type="ECO:0000305" key="6"/>
<feature type="chain" id="PRO_0000174320" description="Splicing factor 3A subunit 3">
    <location>
        <begin position="1"/>
        <end position="503"/>
    </location>
</feature>
<feature type="zinc finger region" description="Matrin-type" evidence="2">
    <location>
        <begin position="408"/>
        <end position="439"/>
    </location>
</feature>
<feature type="region of interest" description="Disordered" evidence="3">
    <location>
        <begin position="296"/>
        <end position="317"/>
    </location>
</feature>
<feature type="region of interest" description="Disordered" evidence="3">
    <location>
        <begin position="341"/>
        <end position="384"/>
    </location>
</feature>
<feature type="compositionally biased region" description="Acidic residues" evidence="3">
    <location>
        <begin position="358"/>
        <end position="377"/>
    </location>
</feature>
<feature type="modified residue" description="Phosphoserine" evidence="4">
    <location>
        <position position="360"/>
    </location>
</feature>
<feature type="modified residue" description="Phosphoserine" evidence="4">
    <location>
        <position position="365"/>
    </location>
</feature>
<feature type="modified residue" description="Phosphoserine" evidence="4">
    <location>
        <position position="367"/>
    </location>
</feature>
<sequence>METLLEQQRRLHEERERLVKLMVDEHATKKPGEKERIHSEHRLKYLMELHHNSTSQLRDLYEDKDNERKAEIAALSGPNEFNEFYARLKQIKQFYKSHPAEVSVPLSVEFDEMIRVYNNPDDMSALVEFTDEEGGGRYLDLNECYELYLNLRSVEKLDYITYLMSFDHVFDIPRERKNREYRIYIETLNDYLHHFILRIQPLLDLEGELLKVELDFQRQWLMGTFPGFSIKETESALANTGAHLDLSAFSSWEELASLGLDRLKSALVALGLKCGGTLEERAQRLFSTKGKSTLDPALMAKKPSAKTASAQSREHERHKEIAQLEALLYKYADLLSEQRAATKENVQRKQARTGGERDDSDVEASESDNEDDPDADDVPYNPKNLPLGWDGKPIPYWLYKLHGLNISYNCEICGNFTYKGPKAFQRHFAEWRHAHGMRCLGIPNTAHFANVTQIEDAITLWEKLKSQKQSERWVADQEEEFEDSLGNVVNRKTFEDLKRQGLL</sequence>
<reference key="1">
    <citation type="journal article" date="1998" name="Mol. Cell. Biol.">
        <title>Multiple developmental requirements of noisette, the Drosophila homolog of the U2 snRNP-associated polypeptide SP3a60.</title>
        <authorList>
            <person name="Meyer V."/>
            <person name="Oliver B."/>
            <person name="Pauli D."/>
        </authorList>
    </citation>
    <scope>NUCLEOTIDE SEQUENCE [GENOMIC DNA]</scope>
    <scope>CHARACTERIZATION</scope>
    <scope>DISRUPTION PHENOTYPE</scope>
    <source>
        <tissue>Embryo</tissue>
        <tissue>Ovary</tissue>
    </source>
</reference>
<reference key="2">
    <citation type="journal article" date="2000" name="Science">
        <title>The genome sequence of Drosophila melanogaster.</title>
        <authorList>
            <person name="Adams M.D."/>
            <person name="Celniker S.E."/>
            <person name="Holt R.A."/>
            <person name="Evans C.A."/>
            <person name="Gocayne J.D."/>
            <person name="Amanatides P.G."/>
            <person name="Scherer S.E."/>
            <person name="Li P.W."/>
            <person name="Hoskins R.A."/>
            <person name="Galle R.F."/>
            <person name="George R.A."/>
            <person name="Lewis S.E."/>
            <person name="Richards S."/>
            <person name="Ashburner M."/>
            <person name="Henderson S.N."/>
            <person name="Sutton G.G."/>
            <person name="Wortman J.R."/>
            <person name="Yandell M.D."/>
            <person name="Zhang Q."/>
            <person name="Chen L.X."/>
            <person name="Brandon R.C."/>
            <person name="Rogers Y.-H.C."/>
            <person name="Blazej R.G."/>
            <person name="Champe M."/>
            <person name="Pfeiffer B.D."/>
            <person name="Wan K.H."/>
            <person name="Doyle C."/>
            <person name="Baxter E.G."/>
            <person name="Helt G."/>
            <person name="Nelson C.R."/>
            <person name="Miklos G.L.G."/>
            <person name="Abril J.F."/>
            <person name="Agbayani A."/>
            <person name="An H.-J."/>
            <person name="Andrews-Pfannkoch C."/>
            <person name="Baldwin D."/>
            <person name="Ballew R.M."/>
            <person name="Basu A."/>
            <person name="Baxendale J."/>
            <person name="Bayraktaroglu L."/>
            <person name="Beasley E.M."/>
            <person name="Beeson K.Y."/>
            <person name="Benos P.V."/>
            <person name="Berman B.P."/>
            <person name="Bhandari D."/>
            <person name="Bolshakov S."/>
            <person name="Borkova D."/>
            <person name="Botchan M.R."/>
            <person name="Bouck J."/>
            <person name="Brokstein P."/>
            <person name="Brottier P."/>
            <person name="Burtis K.C."/>
            <person name="Busam D.A."/>
            <person name="Butler H."/>
            <person name="Cadieu E."/>
            <person name="Center A."/>
            <person name="Chandra I."/>
            <person name="Cherry J.M."/>
            <person name="Cawley S."/>
            <person name="Dahlke C."/>
            <person name="Davenport L.B."/>
            <person name="Davies P."/>
            <person name="de Pablos B."/>
            <person name="Delcher A."/>
            <person name="Deng Z."/>
            <person name="Mays A.D."/>
            <person name="Dew I."/>
            <person name="Dietz S.M."/>
            <person name="Dodson K."/>
            <person name="Doup L.E."/>
            <person name="Downes M."/>
            <person name="Dugan-Rocha S."/>
            <person name="Dunkov B.C."/>
            <person name="Dunn P."/>
            <person name="Durbin K.J."/>
            <person name="Evangelista C.C."/>
            <person name="Ferraz C."/>
            <person name="Ferriera S."/>
            <person name="Fleischmann W."/>
            <person name="Fosler C."/>
            <person name="Gabrielian A.E."/>
            <person name="Garg N.S."/>
            <person name="Gelbart W.M."/>
            <person name="Glasser K."/>
            <person name="Glodek A."/>
            <person name="Gong F."/>
            <person name="Gorrell J.H."/>
            <person name="Gu Z."/>
            <person name="Guan P."/>
            <person name="Harris M."/>
            <person name="Harris N.L."/>
            <person name="Harvey D.A."/>
            <person name="Heiman T.J."/>
            <person name="Hernandez J.R."/>
            <person name="Houck J."/>
            <person name="Hostin D."/>
            <person name="Houston K.A."/>
            <person name="Howland T.J."/>
            <person name="Wei M.-H."/>
            <person name="Ibegwam C."/>
            <person name="Jalali M."/>
            <person name="Kalush F."/>
            <person name="Karpen G.H."/>
            <person name="Ke Z."/>
            <person name="Kennison J.A."/>
            <person name="Ketchum K.A."/>
            <person name="Kimmel B.E."/>
            <person name="Kodira C.D."/>
            <person name="Kraft C.L."/>
            <person name="Kravitz S."/>
            <person name="Kulp D."/>
            <person name="Lai Z."/>
            <person name="Lasko P."/>
            <person name="Lei Y."/>
            <person name="Levitsky A.A."/>
            <person name="Li J.H."/>
            <person name="Li Z."/>
            <person name="Liang Y."/>
            <person name="Lin X."/>
            <person name="Liu X."/>
            <person name="Mattei B."/>
            <person name="McIntosh T.C."/>
            <person name="McLeod M.P."/>
            <person name="McPherson D."/>
            <person name="Merkulov G."/>
            <person name="Milshina N.V."/>
            <person name="Mobarry C."/>
            <person name="Morris J."/>
            <person name="Moshrefi A."/>
            <person name="Mount S.M."/>
            <person name="Moy M."/>
            <person name="Murphy B."/>
            <person name="Murphy L."/>
            <person name="Muzny D.M."/>
            <person name="Nelson D.L."/>
            <person name="Nelson D.R."/>
            <person name="Nelson K.A."/>
            <person name="Nixon K."/>
            <person name="Nusskern D.R."/>
            <person name="Pacleb J.M."/>
            <person name="Palazzolo M."/>
            <person name="Pittman G.S."/>
            <person name="Pan S."/>
            <person name="Pollard J."/>
            <person name="Puri V."/>
            <person name="Reese M.G."/>
            <person name="Reinert K."/>
            <person name="Remington K."/>
            <person name="Saunders R.D.C."/>
            <person name="Scheeler F."/>
            <person name="Shen H."/>
            <person name="Shue B.C."/>
            <person name="Siden-Kiamos I."/>
            <person name="Simpson M."/>
            <person name="Skupski M.P."/>
            <person name="Smith T.J."/>
            <person name="Spier E."/>
            <person name="Spradling A.C."/>
            <person name="Stapleton M."/>
            <person name="Strong R."/>
            <person name="Sun E."/>
            <person name="Svirskas R."/>
            <person name="Tector C."/>
            <person name="Turner R."/>
            <person name="Venter E."/>
            <person name="Wang A.H."/>
            <person name="Wang X."/>
            <person name="Wang Z.-Y."/>
            <person name="Wassarman D.A."/>
            <person name="Weinstock G.M."/>
            <person name="Weissenbach J."/>
            <person name="Williams S.M."/>
            <person name="Woodage T."/>
            <person name="Worley K.C."/>
            <person name="Wu D."/>
            <person name="Yang S."/>
            <person name="Yao Q.A."/>
            <person name="Ye J."/>
            <person name="Yeh R.-F."/>
            <person name="Zaveri J.S."/>
            <person name="Zhan M."/>
            <person name="Zhang G."/>
            <person name="Zhao Q."/>
            <person name="Zheng L."/>
            <person name="Zheng X.H."/>
            <person name="Zhong F.N."/>
            <person name="Zhong W."/>
            <person name="Zhou X."/>
            <person name="Zhu S.C."/>
            <person name="Zhu X."/>
            <person name="Smith H.O."/>
            <person name="Gibbs R.A."/>
            <person name="Myers E.W."/>
            <person name="Rubin G.M."/>
            <person name="Venter J.C."/>
        </authorList>
    </citation>
    <scope>NUCLEOTIDE SEQUENCE [LARGE SCALE GENOMIC DNA]</scope>
    <source>
        <strain>Berkeley</strain>
    </source>
</reference>
<reference key="3">
    <citation type="journal article" date="2002" name="Genome Biol.">
        <title>Annotation of the Drosophila melanogaster euchromatic genome: a systematic review.</title>
        <authorList>
            <person name="Misra S."/>
            <person name="Crosby M.A."/>
            <person name="Mungall C.J."/>
            <person name="Matthews B.B."/>
            <person name="Campbell K.S."/>
            <person name="Hradecky P."/>
            <person name="Huang Y."/>
            <person name="Kaminker J.S."/>
            <person name="Millburn G.H."/>
            <person name="Prochnik S.E."/>
            <person name="Smith C.D."/>
            <person name="Tupy J.L."/>
            <person name="Whitfield E.J."/>
            <person name="Bayraktaroglu L."/>
            <person name="Berman B.P."/>
            <person name="Bettencourt B.R."/>
            <person name="Celniker S.E."/>
            <person name="de Grey A.D.N.J."/>
            <person name="Drysdale R.A."/>
            <person name="Harris N.L."/>
            <person name="Richter J."/>
            <person name="Russo S."/>
            <person name="Schroeder A.J."/>
            <person name="Shu S.Q."/>
            <person name="Stapleton M."/>
            <person name="Yamada C."/>
            <person name="Ashburner M."/>
            <person name="Gelbart W.M."/>
            <person name="Rubin G.M."/>
            <person name="Lewis S.E."/>
        </authorList>
    </citation>
    <scope>GENOME REANNOTATION</scope>
    <source>
        <strain>Berkeley</strain>
    </source>
</reference>
<reference key="4">
    <citation type="journal article" date="2002" name="Genome Biol.">
        <title>A Drosophila full-length cDNA resource.</title>
        <authorList>
            <person name="Stapleton M."/>
            <person name="Carlson J.W."/>
            <person name="Brokstein P."/>
            <person name="Yu C."/>
            <person name="Champe M."/>
            <person name="George R.A."/>
            <person name="Guarin H."/>
            <person name="Kronmiller B."/>
            <person name="Pacleb J.M."/>
            <person name="Park S."/>
            <person name="Wan K.H."/>
            <person name="Rubin G.M."/>
            <person name="Celniker S.E."/>
        </authorList>
    </citation>
    <scope>NUCLEOTIDE SEQUENCE [LARGE SCALE MRNA]</scope>
    <source>
        <strain>Berkeley</strain>
        <tissue>Embryo</tissue>
    </source>
</reference>
<reference key="5">
    <citation type="journal article" date="2008" name="J. Proteome Res.">
        <title>Phosphoproteome analysis of Drosophila melanogaster embryos.</title>
        <authorList>
            <person name="Zhai B."/>
            <person name="Villen J."/>
            <person name="Beausoleil S.A."/>
            <person name="Mintseris J."/>
            <person name="Gygi S.P."/>
        </authorList>
    </citation>
    <scope>PHOSPHORYLATION [LARGE SCALE ANALYSIS] AT SER-360; SER-365 AND SER-367</scope>
    <scope>IDENTIFICATION BY MASS SPECTROMETRY</scope>
    <source>
        <tissue>Embryo</tissue>
    </source>
</reference>
<proteinExistence type="evidence at protein level"/>
<name>NOI_DROME</name>
<accession>O46106</accession>
<comment type="function">
    <text evidence="1">Probable subunit of a splicing factor complex required for 'A' complex assembly formed by the stable binding of U2 snRNP to the branchpoint sequence (BPS) in pre-mRNA (By similarity). Involved in male fertility.</text>
</comment>
<comment type="subunit">
    <text evidence="1">Probable component of a the U2 small nuclear ribonucleoproteins complex (U2 snRNP).</text>
</comment>
<comment type="subcellular location">
    <subcellularLocation>
        <location>Nucleus</location>
    </subcellularLocation>
    <text>Excluded from the nucleoli.</text>
</comment>
<comment type="tissue specificity">
    <text>Ubiquitous. In ovaries and testes, it is expressed in all germ and somatic cells. Highly expressed in spermatogonias and spermatocytes. Highly expressed in the germ cells of larval testes, while it is weakly expressed in fat body cells, in polyploid nuclei of salivary glands, and in larval brain.</text>
</comment>
<comment type="developmental stage">
    <text>Expressed throughout embryogenesis from syncytial blastoderm stage.</text>
</comment>
<comment type="disruption phenotype">
    <text evidence="5">'Noisette' means 'hazel nut' in French, and is due to the small size of testes in mutants.</text>
</comment>
<comment type="similarity">
    <text evidence="6">Belongs to the SF3A3 family.</text>
</comment>
<gene>
    <name type="primary">noi</name>
    <name type="ORF">CG2925</name>
</gene>
<organism>
    <name type="scientific">Drosophila melanogaster</name>
    <name type="common">Fruit fly</name>
    <dbReference type="NCBI Taxonomy" id="7227"/>
    <lineage>
        <taxon>Eukaryota</taxon>
        <taxon>Metazoa</taxon>
        <taxon>Ecdysozoa</taxon>
        <taxon>Arthropoda</taxon>
        <taxon>Hexapoda</taxon>
        <taxon>Insecta</taxon>
        <taxon>Pterygota</taxon>
        <taxon>Neoptera</taxon>
        <taxon>Endopterygota</taxon>
        <taxon>Diptera</taxon>
        <taxon>Brachycera</taxon>
        <taxon>Muscomorpha</taxon>
        <taxon>Ephydroidea</taxon>
        <taxon>Drosophilidae</taxon>
        <taxon>Drosophila</taxon>
        <taxon>Sophophora</taxon>
    </lineage>
</organism>